<feature type="chain" id="PRO_0000287271" description="Pre-mRNA-splicing factor 38A">
    <location>
        <begin position="1"/>
        <end position="312"/>
    </location>
</feature>
<feature type="region of interest" description="N-terminal protein interaction domain" evidence="1">
    <location>
        <begin position="1"/>
        <end position="179"/>
    </location>
</feature>
<feature type="region of interest" description="Disordered" evidence="3">
    <location>
        <begin position="181"/>
        <end position="312"/>
    </location>
</feature>
<feature type="coiled-coil region" evidence="2">
    <location>
        <begin position="170"/>
        <end position="204"/>
    </location>
</feature>
<feature type="compositionally biased region" description="Acidic residues" evidence="3">
    <location>
        <begin position="184"/>
        <end position="202"/>
    </location>
</feature>
<feature type="compositionally biased region" description="Basic and acidic residues" evidence="3">
    <location>
        <begin position="203"/>
        <end position="224"/>
    </location>
</feature>
<feature type="compositionally biased region" description="Basic residues" evidence="3">
    <location>
        <begin position="225"/>
        <end position="294"/>
    </location>
</feature>
<feature type="compositionally biased region" description="Basic residues" evidence="3">
    <location>
        <begin position="301"/>
        <end position="312"/>
    </location>
</feature>
<feature type="modified residue" description="Phosphoserine" evidence="1">
    <location>
        <position position="11"/>
    </location>
</feature>
<feature type="modified residue" description="Phosphoserine" evidence="1">
    <location>
        <position position="193"/>
    </location>
</feature>
<feature type="modified residue" description="Phosphoserine" evidence="1">
    <location>
        <position position="194"/>
    </location>
</feature>
<feature type="modified residue" description="Phosphoserine" evidence="1">
    <location>
        <position position="209"/>
    </location>
</feature>
<feature type="modified residue" description="Phosphoserine" evidence="1">
    <location>
        <position position="226"/>
    </location>
</feature>
<proteinExistence type="evidence at transcript level"/>
<protein>
    <recommendedName>
        <fullName>Pre-mRNA-splicing factor 38A</fullName>
    </recommendedName>
</protein>
<accession>Q0P5I6</accession>
<dbReference type="EMBL" id="BC119992">
    <property type="protein sequence ID" value="AAI19993.1"/>
    <property type="molecule type" value="mRNA"/>
</dbReference>
<dbReference type="RefSeq" id="NP_001068775.1">
    <property type="nucleotide sequence ID" value="NM_001075307.1"/>
</dbReference>
<dbReference type="SMR" id="Q0P5I6"/>
<dbReference type="FunCoup" id="Q0P5I6">
    <property type="interactions" value="4337"/>
</dbReference>
<dbReference type="STRING" id="9913.ENSBTAP00000003524"/>
<dbReference type="PaxDb" id="9913-ENSBTAP00000003524"/>
<dbReference type="Ensembl" id="ENSBTAT00000003524.5">
    <property type="protein sequence ID" value="ENSBTAP00000003524.4"/>
    <property type="gene ID" value="ENSBTAG00000002720.6"/>
</dbReference>
<dbReference type="GeneID" id="507240"/>
<dbReference type="KEGG" id="bta:507240"/>
<dbReference type="CTD" id="84950"/>
<dbReference type="VEuPathDB" id="HostDB:ENSBTAG00000002720"/>
<dbReference type="VGNC" id="VGNC:33375">
    <property type="gene designation" value="PRPF38A"/>
</dbReference>
<dbReference type="eggNOG" id="KOG2889">
    <property type="taxonomic scope" value="Eukaryota"/>
</dbReference>
<dbReference type="GeneTree" id="ENSGT00730000111085"/>
<dbReference type="HOGENOM" id="CLU_039466_1_0_1"/>
<dbReference type="InParanoid" id="Q0P5I6"/>
<dbReference type="OMA" id="HTYWKEQ"/>
<dbReference type="OrthoDB" id="190958at2759"/>
<dbReference type="TreeFam" id="TF105910"/>
<dbReference type="Reactome" id="R-BTA-72163">
    <property type="pathway name" value="mRNA Splicing - Major Pathway"/>
</dbReference>
<dbReference type="Proteomes" id="UP000009136">
    <property type="component" value="Chromosome 3"/>
</dbReference>
<dbReference type="Bgee" id="ENSBTAG00000002720">
    <property type="expression patterns" value="Expressed in oocyte and 111 other cell types or tissues"/>
</dbReference>
<dbReference type="GO" id="GO:0005654">
    <property type="term" value="C:nucleoplasm"/>
    <property type="evidence" value="ECO:0007669"/>
    <property type="project" value="Ensembl"/>
</dbReference>
<dbReference type="GO" id="GO:0005634">
    <property type="term" value="C:nucleus"/>
    <property type="evidence" value="ECO:0000250"/>
    <property type="project" value="UniProtKB"/>
</dbReference>
<dbReference type="GO" id="GO:0071011">
    <property type="term" value="C:precatalytic spliceosome"/>
    <property type="evidence" value="ECO:0000318"/>
    <property type="project" value="GO_Central"/>
</dbReference>
<dbReference type="GO" id="GO:0071005">
    <property type="term" value="C:U2-type precatalytic spliceosome"/>
    <property type="evidence" value="ECO:0000250"/>
    <property type="project" value="UniProtKB"/>
</dbReference>
<dbReference type="GO" id="GO:0000398">
    <property type="term" value="P:mRNA splicing, via spliceosome"/>
    <property type="evidence" value="ECO:0000250"/>
    <property type="project" value="UniProtKB"/>
</dbReference>
<dbReference type="InterPro" id="IPR005037">
    <property type="entry name" value="PRP38"/>
</dbReference>
<dbReference type="InterPro" id="IPR024767">
    <property type="entry name" value="PRP38_C"/>
</dbReference>
<dbReference type="PANTHER" id="PTHR23142">
    <property type="entry name" value="PRE-MRNA-SPLICING FACTOR 38A-RELATED"/>
    <property type="match status" value="1"/>
</dbReference>
<dbReference type="Pfam" id="PF03371">
    <property type="entry name" value="PRP38"/>
    <property type="match status" value="1"/>
</dbReference>
<dbReference type="Pfam" id="PF12871">
    <property type="entry name" value="PRP38_assoc"/>
    <property type="match status" value="1"/>
</dbReference>
<sequence>MANRTVKDAHSIHGTNPQYLVEKIIRTRIYESKYWKEECFGLTAELVVDKAMELRFVGGVYGGNIKPTPFLCLTLKMLQIQPEKDIIVEFIKNEDFKYVRMLGALYMRLTGTAIDCYKYLEPLYNDYRKIKSQNRNGEFELMHVDEFIDELLHSERVCDIILPRLQKRYVLEEAEQLEPRVSALEEDMDDVESSEEEEEEDEKLERVPSPDHRRRSYRDLDKPRRSPTLRYRRSRSRSPRRRSRSPKRRSPSPRRERHRSKSPRRHRSRSRDRRHRSRSKSPGHHRSHRHRSHSKSPERSKKSHKKSRRGNE</sequence>
<reference key="1">
    <citation type="submission" date="2006-08" db="EMBL/GenBank/DDBJ databases">
        <authorList>
            <consortium name="NIH - Mammalian Gene Collection (MGC) project"/>
        </authorList>
    </citation>
    <scope>NUCLEOTIDE SEQUENCE [LARGE SCALE MRNA]</scope>
    <source>
        <strain>Hereford</strain>
        <tissue>Thymus</tissue>
    </source>
</reference>
<gene>
    <name type="primary">PRPF38A</name>
</gene>
<keyword id="KW-0175">Coiled coil</keyword>
<keyword id="KW-0507">mRNA processing</keyword>
<keyword id="KW-0508">mRNA splicing</keyword>
<keyword id="KW-0539">Nucleus</keyword>
<keyword id="KW-0597">Phosphoprotein</keyword>
<keyword id="KW-1185">Reference proteome</keyword>
<keyword id="KW-0747">Spliceosome</keyword>
<organism>
    <name type="scientific">Bos taurus</name>
    <name type="common">Bovine</name>
    <dbReference type="NCBI Taxonomy" id="9913"/>
    <lineage>
        <taxon>Eukaryota</taxon>
        <taxon>Metazoa</taxon>
        <taxon>Chordata</taxon>
        <taxon>Craniata</taxon>
        <taxon>Vertebrata</taxon>
        <taxon>Euteleostomi</taxon>
        <taxon>Mammalia</taxon>
        <taxon>Eutheria</taxon>
        <taxon>Laurasiatheria</taxon>
        <taxon>Artiodactyla</taxon>
        <taxon>Ruminantia</taxon>
        <taxon>Pecora</taxon>
        <taxon>Bovidae</taxon>
        <taxon>Bovinae</taxon>
        <taxon>Bos</taxon>
    </lineage>
</organism>
<evidence type="ECO:0000250" key="1">
    <source>
        <dbReference type="UniProtKB" id="Q8NAV1"/>
    </source>
</evidence>
<evidence type="ECO:0000255" key="2"/>
<evidence type="ECO:0000256" key="3">
    <source>
        <dbReference type="SAM" id="MobiDB-lite"/>
    </source>
</evidence>
<evidence type="ECO:0000305" key="4"/>
<name>PR38A_BOVIN</name>
<comment type="function">
    <text evidence="1">Involved in pre-mRNA splicing as a component of the spliceosome.</text>
</comment>
<comment type="subunit">
    <text evidence="1">Component of the spliceosome B complex. Interacts (via N-terminal interaction domain) with ZMAT2 and MFAP1.</text>
</comment>
<comment type="subcellular location">
    <subcellularLocation>
        <location evidence="1">Nucleus</location>
    </subcellularLocation>
</comment>
<comment type="similarity">
    <text evidence="4">Belongs to the PRP38 family.</text>
</comment>